<reference key="1">
    <citation type="journal article" date="2008" name="J. Bacteriol.">
        <title>Insights into the environmental resistance gene pool from the genome sequence of the multidrug-resistant environmental isolate Escherichia coli SMS-3-5.</title>
        <authorList>
            <person name="Fricke W.F."/>
            <person name="Wright M.S."/>
            <person name="Lindell A.H."/>
            <person name="Harkins D.M."/>
            <person name="Baker-Austin C."/>
            <person name="Ravel J."/>
            <person name="Stepanauskas R."/>
        </authorList>
    </citation>
    <scope>NUCLEOTIDE SEQUENCE [LARGE SCALE GENOMIC DNA]</scope>
    <source>
        <strain>SMS-3-5 / SECEC</strain>
    </source>
</reference>
<proteinExistence type="inferred from homology"/>
<sequence length="329" mass="35178">MVKTQRVVITPGEPAGIGPDLIVQLAQREWPVELVVCADATLLTDRAAMLGLPLTLRPYSPNSPAQPQTAGTLTLLPVALRESVTAGQLAVENGHYVVETLARACDGCLNGEFAALITGPVHKGVINDAGIPFTGHTEFFEERSQAKKVVMMLATEELRVALATTHLPLRDIADAITPALLHEVIAILHHDLRTKFGIAEPRILVCGLNPHAGEGGHMGTEEIDTIIPVLDELRAQGMKLNGPLPADTLFQPKYLDNADAVLAMYHDQGLPVLKYQGFGRGVNITLGLPFIRTSVDHGTALELAGRGKADVGSFITALNLAIKMIVNTQ</sequence>
<keyword id="KW-0170">Cobalt</keyword>
<keyword id="KW-0963">Cytoplasm</keyword>
<keyword id="KW-0460">Magnesium</keyword>
<keyword id="KW-0479">Metal-binding</keyword>
<keyword id="KW-0520">NAD</keyword>
<keyword id="KW-0521">NADP</keyword>
<keyword id="KW-0560">Oxidoreductase</keyword>
<keyword id="KW-0664">Pyridoxine biosynthesis</keyword>
<keyword id="KW-0862">Zinc</keyword>
<comment type="function">
    <text evidence="1">Catalyzes the NAD(P)-dependent oxidation of 4-(phosphooxy)-L-threonine (HTP) into 2-amino-3-oxo-4-(phosphooxy)butyric acid which spontaneously decarboxylates to form 3-amino-2-oxopropyl phosphate (AHAP).</text>
</comment>
<comment type="catalytic activity">
    <reaction evidence="1">
        <text>4-(phosphooxy)-L-threonine + NAD(+) = 3-amino-2-oxopropyl phosphate + CO2 + NADH</text>
        <dbReference type="Rhea" id="RHEA:32275"/>
        <dbReference type="ChEBI" id="CHEBI:16526"/>
        <dbReference type="ChEBI" id="CHEBI:57279"/>
        <dbReference type="ChEBI" id="CHEBI:57540"/>
        <dbReference type="ChEBI" id="CHEBI:57945"/>
        <dbReference type="ChEBI" id="CHEBI:58452"/>
        <dbReference type="EC" id="1.1.1.262"/>
    </reaction>
</comment>
<comment type="cofactor">
    <cofactor evidence="1">
        <name>Zn(2+)</name>
        <dbReference type="ChEBI" id="CHEBI:29105"/>
    </cofactor>
    <cofactor evidence="1">
        <name>Mg(2+)</name>
        <dbReference type="ChEBI" id="CHEBI:18420"/>
    </cofactor>
    <cofactor evidence="1">
        <name>Co(2+)</name>
        <dbReference type="ChEBI" id="CHEBI:48828"/>
    </cofactor>
    <text evidence="1">Binds 1 divalent metal cation per subunit. Can use ions such as Zn(2+), Mg(2+) or Co(2+).</text>
</comment>
<comment type="pathway">
    <text evidence="1">Cofactor biosynthesis; pyridoxine 5'-phosphate biosynthesis; pyridoxine 5'-phosphate from D-erythrose 4-phosphate: step 4/5.</text>
</comment>
<comment type="subunit">
    <text evidence="1">Homodimer.</text>
</comment>
<comment type="subcellular location">
    <subcellularLocation>
        <location evidence="1">Cytoplasm</location>
    </subcellularLocation>
</comment>
<comment type="miscellaneous">
    <text evidence="1">The active site is located at the dimer interface.</text>
</comment>
<comment type="similarity">
    <text evidence="1">Belongs to the PdxA family.</text>
</comment>
<accession>B1LFY8</accession>
<gene>
    <name evidence="1" type="primary">pdxA</name>
    <name type="ordered locus">EcSMS35_0056</name>
</gene>
<feature type="chain" id="PRO_1000128247" description="4-hydroxythreonine-4-phosphate dehydrogenase">
    <location>
        <begin position="1"/>
        <end position="329"/>
    </location>
</feature>
<feature type="binding site" evidence="1">
    <location>
        <position position="136"/>
    </location>
    <ligand>
        <name>substrate</name>
    </ligand>
</feature>
<feature type="binding site" evidence="1">
    <location>
        <position position="137"/>
    </location>
    <ligand>
        <name>substrate</name>
    </ligand>
</feature>
<feature type="binding site" evidence="1">
    <location>
        <position position="166"/>
    </location>
    <ligand>
        <name>a divalent metal cation</name>
        <dbReference type="ChEBI" id="CHEBI:60240"/>
        <note>ligand shared between dimeric partners</note>
    </ligand>
</feature>
<feature type="binding site" evidence="1">
    <location>
        <position position="211"/>
    </location>
    <ligand>
        <name>a divalent metal cation</name>
        <dbReference type="ChEBI" id="CHEBI:60240"/>
        <note>ligand shared between dimeric partners</note>
    </ligand>
</feature>
<feature type="binding site" evidence="1">
    <location>
        <position position="266"/>
    </location>
    <ligand>
        <name>a divalent metal cation</name>
        <dbReference type="ChEBI" id="CHEBI:60240"/>
        <note>ligand shared between dimeric partners</note>
    </ligand>
</feature>
<feature type="binding site" evidence="1">
    <location>
        <position position="274"/>
    </location>
    <ligand>
        <name>substrate</name>
    </ligand>
</feature>
<feature type="binding site" evidence="1">
    <location>
        <position position="283"/>
    </location>
    <ligand>
        <name>substrate</name>
    </ligand>
</feature>
<feature type="binding site" evidence="1">
    <location>
        <position position="292"/>
    </location>
    <ligand>
        <name>substrate</name>
    </ligand>
</feature>
<evidence type="ECO:0000255" key="1">
    <source>
        <dbReference type="HAMAP-Rule" id="MF_00536"/>
    </source>
</evidence>
<name>PDXA_ECOSM</name>
<organism>
    <name type="scientific">Escherichia coli (strain SMS-3-5 / SECEC)</name>
    <dbReference type="NCBI Taxonomy" id="439855"/>
    <lineage>
        <taxon>Bacteria</taxon>
        <taxon>Pseudomonadati</taxon>
        <taxon>Pseudomonadota</taxon>
        <taxon>Gammaproteobacteria</taxon>
        <taxon>Enterobacterales</taxon>
        <taxon>Enterobacteriaceae</taxon>
        <taxon>Escherichia</taxon>
    </lineage>
</organism>
<dbReference type="EC" id="1.1.1.262" evidence="1"/>
<dbReference type="EMBL" id="CP000970">
    <property type="protein sequence ID" value="ACB19621.1"/>
    <property type="molecule type" value="Genomic_DNA"/>
</dbReference>
<dbReference type="RefSeq" id="WP_000241224.1">
    <property type="nucleotide sequence ID" value="NC_010498.1"/>
</dbReference>
<dbReference type="SMR" id="B1LFY8"/>
<dbReference type="KEGG" id="ecm:EcSMS35_0056"/>
<dbReference type="HOGENOM" id="CLU_040168_1_0_6"/>
<dbReference type="UniPathway" id="UPA00244">
    <property type="reaction ID" value="UER00312"/>
</dbReference>
<dbReference type="Proteomes" id="UP000007011">
    <property type="component" value="Chromosome"/>
</dbReference>
<dbReference type="GO" id="GO:0005737">
    <property type="term" value="C:cytoplasm"/>
    <property type="evidence" value="ECO:0007669"/>
    <property type="project" value="UniProtKB-SubCell"/>
</dbReference>
<dbReference type="GO" id="GO:0050570">
    <property type="term" value="F:4-hydroxythreonine-4-phosphate dehydrogenase activity"/>
    <property type="evidence" value="ECO:0007669"/>
    <property type="project" value="UniProtKB-UniRule"/>
</dbReference>
<dbReference type="GO" id="GO:0050897">
    <property type="term" value="F:cobalt ion binding"/>
    <property type="evidence" value="ECO:0007669"/>
    <property type="project" value="UniProtKB-UniRule"/>
</dbReference>
<dbReference type="GO" id="GO:0000287">
    <property type="term" value="F:magnesium ion binding"/>
    <property type="evidence" value="ECO:0007669"/>
    <property type="project" value="UniProtKB-UniRule"/>
</dbReference>
<dbReference type="GO" id="GO:0051287">
    <property type="term" value="F:NAD binding"/>
    <property type="evidence" value="ECO:0007669"/>
    <property type="project" value="InterPro"/>
</dbReference>
<dbReference type="GO" id="GO:0008270">
    <property type="term" value="F:zinc ion binding"/>
    <property type="evidence" value="ECO:0007669"/>
    <property type="project" value="UniProtKB-UniRule"/>
</dbReference>
<dbReference type="GO" id="GO:0042823">
    <property type="term" value="P:pyridoxal phosphate biosynthetic process"/>
    <property type="evidence" value="ECO:0007669"/>
    <property type="project" value="UniProtKB-UniRule"/>
</dbReference>
<dbReference type="GO" id="GO:0008615">
    <property type="term" value="P:pyridoxine biosynthetic process"/>
    <property type="evidence" value="ECO:0007669"/>
    <property type="project" value="UniProtKB-UniRule"/>
</dbReference>
<dbReference type="FunFam" id="3.40.718.10:FF:000010">
    <property type="entry name" value="4-hydroxythreonine-4-phosphate dehydrogenase"/>
    <property type="match status" value="1"/>
</dbReference>
<dbReference type="Gene3D" id="3.40.718.10">
    <property type="entry name" value="Isopropylmalate Dehydrogenase"/>
    <property type="match status" value="1"/>
</dbReference>
<dbReference type="HAMAP" id="MF_00536">
    <property type="entry name" value="PdxA"/>
    <property type="match status" value="1"/>
</dbReference>
<dbReference type="InterPro" id="IPR037510">
    <property type="entry name" value="PdxA"/>
</dbReference>
<dbReference type="InterPro" id="IPR005255">
    <property type="entry name" value="PdxA_fam"/>
</dbReference>
<dbReference type="NCBIfam" id="TIGR00557">
    <property type="entry name" value="pdxA"/>
    <property type="match status" value="1"/>
</dbReference>
<dbReference type="PANTHER" id="PTHR30004">
    <property type="entry name" value="4-HYDROXYTHREONINE-4-PHOSPHATE DEHYDROGENASE"/>
    <property type="match status" value="1"/>
</dbReference>
<dbReference type="PANTHER" id="PTHR30004:SF5">
    <property type="entry name" value="4-HYDROXYTHREONINE-4-PHOSPHATE DEHYDROGENASE"/>
    <property type="match status" value="1"/>
</dbReference>
<dbReference type="Pfam" id="PF04166">
    <property type="entry name" value="PdxA"/>
    <property type="match status" value="1"/>
</dbReference>
<dbReference type="SUPFAM" id="SSF53659">
    <property type="entry name" value="Isocitrate/Isopropylmalate dehydrogenase-like"/>
    <property type="match status" value="1"/>
</dbReference>
<protein>
    <recommendedName>
        <fullName evidence="1">4-hydroxythreonine-4-phosphate dehydrogenase</fullName>
        <ecNumber evidence="1">1.1.1.262</ecNumber>
    </recommendedName>
    <alternativeName>
        <fullName evidence="1">4-(phosphohydroxy)-L-threonine dehydrogenase</fullName>
    </alternativeName>
</protein>